<accession>Q3AFS4</accession>
<feature type="chain" id="PRO_0000240986" description="S-adenosylmethionine synthase">
    <location>
        <begin position="1"/>
        <end position="396"/>
    </location>
</feature>
<feature type="region of interest" description="Flexible loop" evidence="1">
    <location>
        <begin position="99"/>
        <end position="109"/>
    </location>
</feature>
<feature type="binding site" description="in other chain" evidence="1">
    <location>
        <position position="15"/>
    </location>
    <ligand>
        <name>ATP</name>
        <dbReference type="ChEBI" id="CHEBI:30616"/>
        <note>ligand shared between two neighboring subunits</note>
    </ligand>
</feature>
<feature type="binding site" evidence="1">
    <location>
        <position position="17"/>
    </location>
    <ligand>
        <name>Mg(2+)</name>
        <dbReference type="ChEBI" id="CHEBI:18420"/>
    </ligand>
</feature>
<feature type="binding site" evidence="1">
    <location>
        <position position="43"/>
    </location>
    <ligand>
        <name>K(+)</name>
        <dbReference type="ChEBI" id="CHEBI:29103"/>
    </ligand>
</feature>
<feature type="binding site" description="in other chain" evidence="1">
    <location>
        <position position="56"/>
    </location>
    <ligand>
        <name>L-methionine</name>
        <dbReference type="ChEBI" id="CHEBI:57844"/>
        <note>ligand shared between two neighboring subunits</note>
    </ligand>
</feature>
<feature type="binding site" description="in other chain" evidence="1">
    <location>
        <position position="99"/>
    </location>
    <ligand>
        <name>L-methionine</name>
        <dbReference type="ChEBI" id="CHEBI:57844"/>
        <note>ligand shared between two neighboring subunits</note>
    </ligand>
</feature>
<feature type="binding site" description="in other chain" evidence="1">
    <location>
        <begin position="175"/>
        <end position="177"/>
    </location>
    <ligand>
        <name>ATP</name>
        <dbReference type="ChEBI" id="CHEBI:30616"/>
        <note>ligand shared between two neighboring subunits</note>
    </ligand>
</feature>
<feature type="binding site" description="in other chain" evidence="1">
    <location>
        <begin position="241"/>
        <end position="242"/>
    </location>
    <ligand>
        <name>ATP</name>
        <dbReference type="ChEBI" id="CHEBI:30616"/>
        <note>ligand shared between two neighboring subunits</note>
    </ligand>
</feature>
<feature type="binding site" evidence="1">
    <location>
        <position position="250"/>
    </location>
    <ligand>
        <name>ATP</name>
        <dbReference type="ChEBI" id="CHEBI:30616"/>
        <note>ligand shared between two neighboring subunits</note>
    </ligand>
</feature>
<feature type="binding site" evidence="1">
    <location>
        <position position="250"/>
    </location>
    <ligand>
        <name>L-methionine</name>
        <dbReference type="ChEBI" id="CHEBI:57844"/>
        <note>ligand shared between two neighboring subunits</note>
    </ligand>
</feature>
<feature type="binding site" description="in other chain" evidence="1">
    <location>
        <begin position="256"/>
        <end position="257"/>
    </location>
    <ligand>
        <name>ATP</name>
        <dbReference type="ChEBI" id="CHEBI:30616"/>
        <note>ligand shared between two neighboring subunits</note>
    </ligand>
</feature>
<feature type="binding site" evidence="1">
    <location>
        <position position="273"/>
    </location>
    <ligand>
        <name>ATP</name>
        <dbReference type="ChEBI" id="CHEBI:30616"/>
        <note>ligand shared between two neighboring subunits</note>
    </ligand>
</feature>
<feature type="binding site" evidence="1">
    <location>
        <position position="277"/>
    </location>
    <ligand>
        <name>ATP</name>
        <dbReference type="ChEBI" id="CHEBI:30616"/>
        <note>ligand shared between two neighboring subunits</note>
    </ligand>
</feature>
<feature type="binding site" description="in other chain" evidence="1">
    <location>
        <position position="281"/>
    </location>
    <ligand>
        <name>L-methionine</name>
        <dbReference type="ChEBI" id="CHEBI:57844"/>
        <note>ligand shared between two neighboring subunits</note>
    </ligand>
</feature>
<keyword id="KW-0067">ATP-binding</keyword>
<keyword id="KW-0963">Cytoplasm</keyword>
<keyword id="KW-0460">Magnesium</keyword>
<keyword id="KW-0479">Metal-binding</keyword>
<keyword id="KW-0547">Nucleotide-binding</keyword>
<keyword id="KW-0554">One-carbon metabolism</keyword>
<keyword id="KW-0630">Potassium</keyword>
<keyword id="KW-1185">Reference proteome</keyword>
<keyword id="KW-0808">Transferase</keyword>
<dbReference type="EC" id="2.5.1.6" evidence="1"/>
<dbReference type="EMBL" id="CP000141">
    <property type="protein sequence ID" value="ABB14896.1"/>
    <property type="molecule type" value="Genomic_DNA"/>
</dbReference>
<dbReference type="RefSeq" id="WP_011343086.1">
    <property type="nucleotide sequence ID" value="NC_007503.1"/>
</dbReference>
<dbReference type="SMR" id="Q3AFS4"/>
<dbReference type="FunCoup" id="Q3AFS4">
    <property type="interactions" value="455"/>
</dbReference>
<dbReference type="STRING" id="246194.CHY_0138"/>
<dbReference type="KEGG" id="chy:CHY_0138"/>
<dbReference type="eggNOG" id="COG0192">
    <property type="taxonomic scope" value="Bacteria"/>
</dbReference>
<dbReference type="HOGENOM" id="CLU_041802_1_1_9"/>
<dbReference type="InParanoid" id="Q3AFS4"/>
<dbReference type="OrthoDB" id="9801686at2"/>
<dbReference type="UniPathway" id="UPA00315">
    <property type="reaction ID" value="UER00080"/>
</dbReference>
<dbReference type="Proteomes" id="UP000002706">
    <property type="component" value="Chromosome"/>
</dbReference>
<dbReference type="GO" id="GO:0005737">
    <property type="term" value="C:cytoplasm"/>
    <property type="evidence" value="ECO:0007669"/>
    <property type="project" value="UniProtKB-SubCell"/>
</dbReference>
<dbReference type="GO" id="GO:0005524">
    <property type="term" value="F:ATP binding"/>
    <property type="evidence" value="ECO:0007669"/>
    <property type="project" value="UniProtKB-UniRule"/>
</dbReference>
<dbReference type="GO" id="GO:0000287">
    <property type="term" value="F:magnesium ion binding"/>
    <property type="evidence" value="ECO:0007669"/>
    <property type="project" value="UniProtKB-UniRule"/>
</dbReference>
<dbReference type="GO" id="GO:0004478">
    <property type="term" value="F:methionine adenosyltransferase activity"/>
    <property type="evidence" value="ECO:0007669"/>
    <property type="project" value="UniProtKB-UniRule"/>
</dbReference>
<dbReference type="GO" id="GO:0006730">
    <property type="term" value="P:one-carbon metabolic process"/>
    <property type="evidence" value="ECO:0007669"/>
    <property type="project" value="UniProtKB-KW"/>
</dbReference>
<dbReference type="GO" id="GO:0006556">
    <property type="term" value="P:S-adenosylmethionine biosynthetic process"/>
    <property type="evidence" value="ECO:0007669"/>
    <property type="project" value="UniProtKB-UniRule"/>
</dbReference>
<dbReference type="CDD" id="cd18079">
    <property type="entry name" value="S-AdoMet_synt"/>
    <property type="match status" value="1"/>
</dbReference>
<dbReference type="FunFam" id="3.30.300.10:FF:000003">
    <property type="entry name" value="S-adenosylmethionine synthase"/>
    <property type="match status" value="1"/>
</dbReference>
<dbReference type="FunFam" id="3.30.300.10:FF:000004">
    <property type="entry name" value="S-adenosylmethionine synthase"/>
    <property type="match status" value="1"/>
</dbReference>
<dbReference type="Gene3D" id="3.30.300.10">
    <property type="match status" value="3"/>
</dbReference>
<dbReference type="HAMAP" id="MF_00086">
    <property type="entry name" value="S_AdoMet_synth1"/>
    <property type="match status" value="1"/>
</dbReference>
<dbReference type="InterPro" id="IPR022631">
    <property type="entry name" value="ADOMET_SYNTHASE_CS"/>
</dbReference>
<dbReference type="InterPro" id="IPR022630">
    <property type="entry name" value="S-AdoMet_synt_C"/>
</dbReference>
<dbReference type="InterPro" id="IPR022629">
    <property type="entry name" value="S-AdoMet_synt_central"/>
</dbReference>
<dbReference type="InterPro" id="IPR022628">
    <property type="entry name" value="S-AdoMet_synt_N"/>
</dbReference>
<dbReference type="InterPro" id="IPR002133">
    <property type="entry name" value="S-AdoMet_synthetase"/>
</dbReference>
<dbReference type="InterPro" id="IPR022636">
    <property type="entry name" value="S-AdoMet_synthetase_sfam"/>
</dbReference>
<dbReference type="NCBIfam" id="TIGR01034">
    <property type="entry name" value="metK"/>
    <property type="match status" value="1"/>
</dbReference>
<dbReference type="PANTHER" id="PTHR11964">
    <property type="entry name" value="S-ADENOSYLMETHIONINE SYNTHETASE"/>
    <property type="match status" value="1"/>
</dbReference>
<dbReference type="Pfam" id="PF02773">
    <property type="entry name" value="S-AdoMet_synt_C"/>
    <property type="match status" value="1"/>
</dbReference>
<dbReference type="Pfam" id="PF02772">
    <property type="entry name" value="S-AdoMet_synt_M"/>
    <property type="match status" value="1"/>
</dbReference>
<dbReference type="Pfam" id="PF00438">
    <property type="entry name" value="S-AdoMet_synt_N"/>
    <property type="match status" value="1"/>
</dbReference>
<dbReference type="PIRSF" id="PIRSF000497">
    <property type="entry name" value="MAT"/>
    <property type="match status" value="1"/>
</dbReference>
<dbReference type="SUPFAM" id="SSF55973">
    <property type="entry name" value="S-adenosylmethionine synthetase"/>
    <property type="match status" value="3"/>
</dbReference>
<dbReference type="PROSITE" id="PS00376">
    <property type="entry name" value="ADOMET_SYNTHASE_1"/>
    <property type="match status" value="1"/>
</dbReference>
<dbReference type="PROSITE" id="PS00377">
    <property type="entry name" value="ADOMET_SYNTHASE_2"/>
    <property type="match status" value="1"/>
</dbReference>
<proteinExistence type="inferred from homology"/>
<reference key="1">
    <citation type="journal article" date="2005" name="PLoS Genet.">
        <title>Life in hot carbon monoxide: the complete genome sequence of Carboxydothermus hydrogenoformans Z-2901.</title>
        <authorList>
            <person name="Wu M."/>
            <person name="Ren Q."/>
            <person name="Durkin A.S."/>
            <person name="Daugherty S.C."/>
            <person name="Brinkac L.M."/>
            <person name="Dodson R.J."/>
            <person name="Madupu R."/>
            <person name="Sullivan S.A."/>
            <person name="Kolonay J.F."/>
            <person name="Nelson W.C."/>
            <person name="Tallon L.J."/>
            <person name="Jones K.M."/>
            <person name="Ulrich L.E."/>
            <person name="Gonzalez J.M."/>
            <person name="Zhulin I.B."/>
            <person name="Robb F.T."/>
            <person name="Eisen J.A."/>
        </authorList>
    </citation>
    <scope>NUCLEOTIDE SEQUENCE [LARGE SCALE GENOMIC DNA]</scope>
    <source>
        <strain>ATCC BAA-161 / DSM 6008 / Z-2901</strain>
    </source>
</reference>
<comment type="function">
    <text evidence="1">Catalyzes the formation of S-adenosylmethionine (AdoMet) from methionine and ATP. The overall synthetic reaction is composed of two sequential steps, AdoMet formation and the subsequent tripolyphosphate hydrolysis which occurs prior to release of AdoMet from the enzyme.</text>
</comment>
<comment type="catalytic activity">
    <reaction evidence="1">
        <text>L-methionine + ATP + H2O = S-adenosyl-L-methionine + phosphate + diphosphate</text>
        <dbReference type="Rhea" id="RHEA:21080"/>
        <dbReference type="ChEBI" id="CHEBI:15377"/>
        <dbReference type="ChEBI" id="CHEBI:30616"/>
        <dbReference type="ChEBI" id="CHEBI:33019"/>
        <dbReference type="ChEBI" id="CHEBI:43474"/>
        <dbReference type="ChEBI" id="CHEBI:57844"/>
        <dbReference type="ChEBI" id="CHEBI:59789"/>
        <dbReference type="EC" id="2.5.1.6"/>
    </reaction>
</comment>
<comment type="cofactor">
    <cofactor evidence="1">
        <name>Mg(2+)</name>
        <dbReference type="ChEBI" id="CHEBI:18420"/>
    </cofactor>
    <text evidence="1">Binds 2 divalent ions per subunit.</text>
</comment>
<comment type="cofactor">
    <cofactor evidence="1">
        <name>K(+)</name>
        <dbReference type="ChEBI" id="CHEBI:29103"/>
    </cofactor>
    <text evidence="1">Binds 1 potassium ion per subunit.</text>
</comment>
<comment type="pathway">
    <text evidence="1">Amino-acid biosynthesis; S-adenosyl-L-methionine biosynthesis; S-adenosyl-L-methionine from L-methionine: step 1/1.</text>
</comment>
<comment type="subunit">
    <text evidence="1">Homotetramer; dimer of dimers.</text>
</comment>
<comment type="subcellular location">
    <subcellularLocation>
        <location evidence="1">Cytoplasm</location>
    </subcellularLocation>
</comment>
<comment type="similarity">
    <text evidence="1">Belongs to the AdoMet synthase family.</text>
</comment>
<organism>
    <name type="scientific">Carboxydothermus hydrogenoformans (strain ATCC BAA-161 / DSM 6008 / Z-2901)</name>
    <dbReference type="NCBI Taxonomy" id="246194"/>
    <lineage>
        <taxon>Bacteria</taxon>
        <taxon>Bacillati</taxon>
        <taxon>Bacillota</taxon>
        <taxon>Clostridia</taxon>
        <taxon>Thermoanaerobacterales</taxon>
        <taxon>Thermoanaerobacteraceae</taxon>
        <taxon>Carboxydothermus</taxon>
    </lineage>
</organism>
<gene>
    <name evidence="1" type="primary">metK</name>
    <name type="ordered locus">CHY_0138</name>
</gene>
<evidence type="ECO:0000255" key="1">
    <source>
        <dbReference type="HAMAP-Rule" id="MF_00086"/>
    </source>
</evidence>
<sequence>MTRRLFTSESVTEGHPDKIADQISDAVLDAILAQDPQARVACETAVTTGLVLVIGEITTSCYVDIPKVVRETIREIGYTRAKYGFDGDTCAVITSIDEQSPDIALGVNRALEAKTGEMTDDEIEAIGAGDQGMMFGYATNETPELMPMPISLAHRLARRLAEVRKSRLLPYLRPDGKTQVTVEYDGDKPVRVDTIVVSTQHHPDVSQEEIRKDIIEHVVKPVIPEHLLDENTRYFVNPTGRFVIGGPQGDAGLTGRKIIVDTYGGMARHGGGAFSGKDPTKVDRSAAYAARYVAKNIVAAGIADKIEIQLAYAIGVAKPVSIMVDTFGTGKIADEKIVELIKKHFDLRPAGIIRMLDLRRPIYKQTAAYGHFGRTDIDLPWERIDKAEILRMEAGL</sequence>
<protein>
    <recommendedName>
        <fullName evidence="1">S-adenosylmethionine synthase</fullName>
        <shortName evidence="1">AdoMet synthase</shortName>
        <ecNumber evidence="1">2.5.1.6</ecNumber>
    </recommendedName>
    <alternativeName>
        <fullName evidence="1">MAT</fullName>
    </alternativeName>
    <alternativeName>
        <fullName evidence="1">Methionine adenosyltransferase</fullName>
    </alternativeName>
</protein>
<name>METK_CARHZ</name>